<gene>
    <name type="ordered locus">MIMI_R398</name>
</gene>
<dbReference type="EMBL" id="AY653733">
    <property type="protein sequence ID" value="AAV50667.1"/>
    <property type="molecule type" value="Genomic_DNA"/>
</dbReference>
<dbReference type="KEGG" id="vg:9925019"/>
<dbReference type="OrthoDB" id="17266at10239"/>
<dbReference type="Proteomes" id="UP000001134">
    <property type="component" value="Genome"/>
</dbReference>
<dbReference type="GO" id="GO:0033644">
    <property type="term" value="C:host cell membrane"/>
    <property type="evidence" value="ECO:0007669"/>
    <property type="project" value="UniProtKB-SubCell"/>
</dbReference>
<dbReference type="GO" id="GO:0016020">
    <property type="term" value="C:membrane"/>
    <property type="evidence" value="ECO:0007669"/>
    <property type="project" value="UniProtKB-KW"/>
</dbReference>
<dbReference type="GO" id="GO:0044423">
    <property type="term" value="C:virion component"/>
    <property type="evidence" value="ECO:0007669"/>
    <property type="project" value="UniProtKB-KW"/>
</dbReference>
<dbReference type="Gene3D" id="3.60.21.10">
    <property type="match status" value="1"/>
</dbReference>
<dbReference type="InterPro" id="IPR029052">
    <property type="entry name" value="Metallo-depent_PP-like"/>
</dbReference>
<dbReference type="PANTHER" id="PTHR46546">
    <property type="entry name" value="SHEWANELLA-LIKE PROTEIN PHOSPHATASE 1"/>
    <property type="match status" value="1"/>
</dbReference>
<dbReference type="PANTHER" id="PTHR46546:SF4">
    <property type="entry name" value="SHEWANELLA-LIKE PROTEIN PHOSPHATASE 1"/>
    <property type="match status" value="1"/>
</dbReference>
<dbReference type="SUPFAM" id="SSF56300">
    <property type="entry name" value="Metallo-dependent phosphatases"/>
    <property type="match status" value="1"/>
</dbReference>
<keyword id="KW-1043">Host membrane</keyword>
<keyword id="KW-0472">Membrane</keyword>
<keyword id="KW-1185">Reference proteome</keyword>
<keyword id="KW-0812">Transmembrane</keyword>
<keyword id="KW-1133">Transmembrane helix</keyword>
<keyword id="KW-0946">Virion</keyword>
<organism>
    <name type="scientific">Acanthamoeba polyphaga mimivirus</name>
    <name type="common">APMV</name>
    <dbReference type="NCBI Taxonomy" id="212035"/>
    <lineage>
        <taxon>Viruses</taxon>
        <taxon>Varidnaviria</taxon>
        <taxon>Bamfordvirae</taxon>
        <taxon>Nucleocytoviricota</taxon>
        <taxon>Megaviricetes</taxon>
        <taxon>Imitervirales</taxon>
        <taxon>Mimiviridae</taxon>
        <taxon>Megamimivirinae</taxon>
        <taxon>Mimivirus</taxon>
        <taxon>Mimivirus bradfordmassiliense</taxon>
    </lineage>
</organism>
<comment type="subcellular location">
    <subcellularLocation>
        <location evidence="3">Host membrane</location>
        <topology evidence="3">Single-pass membrane protein</topology>
    </subcellularLocation>
    <subcellularLocation>
        <location evidence="2">Virion</location>
    </subcellularLocation>
</comment>
<protein>
    <recommendedName>
        <fullName>Uncharacterized protein R398</fullName>
    </recommendedName>
</protein>
<evidence type="ECO:0000255" key="1"/>
<evidence type="ECO:0000269" key="2">
    <source>
    </source>
</evidence>
<evidence type="ECO:0000305" key="3"/>
<proteinExistence type="evidence at protein level"/>
<organismHost>
    <name type="scientific">Acanthamoeba polyphaga</name>
    <name type="common">Amoeba</name>
    <dbReference type="NCBI Taxonomy" id="5757"/>
</organismHost>
<reference key="1">
    <citation type="journal article" date="2004" name="Science">
        <title>The 1.2-megabase genome sequence of Mimivirus.</title>
        <authorList>
            <person name="Raoult D."/>
            <person name="Audic S."/>
            <person name="Robert C."/>
            <person name="Abergel C."/>
            <person name="Renesto P."/>
            <person name="Ogata H."/>
            <person name="La Scola B."/>
            <person name="Susan M."/>
            <person name="Claverie J.-M."/>
        </authorList>
    </citation>
    <scope>NUCLEOTIDE SEQUENCE [LARGE SCALE GENOMIC DNA]</scope>
    <source>
        <strain>Rowbotham-Bradford</strain>
    </source>
</reference>
<reference key="2">
    <citation type="journal article" date="2006" name="J. Virol.">
        <title>Mimivirus giant particles incorporate a large fraction of anonymous and unique gene products.</title>
        <authorList>
            <person name="Renesto P."/>
            <person name="Abergel C."/>
            <person name="Decloquement P."/>
            <person name="Moinier D."/>
            <person name="Azza S."/>
            <person name="Ogata H."/>
            <person name="Fourquet P."/>
            <person name="Gorvel J.-P."/>
            <person name="Claverie J.-M."/>
            <person name="Raoult D."/>
        </authorList>
    </citation>
    <scope>IDENTIFICATION BY MASS SPECTROMETRY [LARGE SCALE ANALYSIS]</scope>
    <scope>SUBCELLULAR LOCATION</scope>
</reference>
<sequence length="252" mass="28833">MIFFDMMHNKASKHGGAVYSLLGNHELMNTQGNFDYVSYENYHNFDYDSPSGEKYTGSLGRQNVFKPGSNFVKKMACNRLSVLVIGSTMFTHAGVLPVLARKLDKLDLDSNKKLEYLNMIVRKWLLNKLSGKQDEEYKSLFINDTKISPFWNRIYGMIPNNTSIDSDQCFNSVKKTLQVFKIGKIVVGHTPQLFTNKDGINGTCYERGEDNKLYRIDGGFADAFNAFNKKHVVQVLEITDDKYFRIITSKKN</sequence>
<accession>Q5UQJ8</accession>
<name>YR398_MIMIV</name>
<feature type="chain" id="PRO_0000244042" description="Uncharacterized protein R398">
    <location>
        <begin position="1"/>
        <end position="252"/>
    </location>
</feature>
<feature type="transmembrane region" description="Helical" evidence="1">
    <location>
        <begin position="80"/>
        <end position="100"/>
    </location>
</feature>